<comment type="function">
    <text>Flagellin is the subunit protein which polymerizes to form the filaments of bacterial flagella.</text>
</comment>
<comment type="subunit">
    <text>Heteromer of flaA and flaB.</text>
</comment>
<comment type="subcellular location">
    <subcellularLocation>
        <location>Secreted</location>
    </subcellularLocation>
    <subcellularLocation>
        <location>Bacterial flagellum</location>
    </subcellularLocation>
</comment>
<comment type="similarity">
    <text evidence="2">Belongs to the bacterial flagellin family.</text>
</comment>
<protein>
    <recommendedName>
        <fullName>Flagellin B</fullName>
    </recommendedName>
</protein>
<sequence length="575" mass="59779">MGFRINTNIGALNAHANSVVNARELDKSLSRLSSGLRINSAADDASGMAIADSLRSQAATLGQAINNGNDAIGILQTADKAMDEQLKILDTIKTKATQAAQDGQSLKTRTMLQADINRLMEELDNIANTTSFNGKQLLSGNFINQEFQIGASSNQTIKATIGATQSSKIGLTRFETGSRISVGGEVQFTLKNYNGIDDFKFQKVVISTSVGTGLGALAEEINKSADQTGVRATFTVETRGMGAVRAGATSEDFAINGVKIGQIEYKDGDANGALVSAINSVKDTTGVEASIDENGKLLLTSREGRGIKIEGNIGRGAFINPNMLENYGRLSLVKNDGKDILISGTNLSAIGFGTGNMISQASVSLRESKGQIDANVADAMGFNSANKGNILGGYSSVSAYMSSTGSGFSSGSGFSVGSGKNYSTGFANTIAISAASQLSAVYNVSAGSGFSSGSNLSQFATMKTSAGNTLGVKDETAGVTTLKGAMAVMDIAETAITNLDQIRADIGSVQNQLQVTINNITVTQVNVKAAESTIRDVDFAAESANFSKYNILAQSGSYAMSQANAVQQNVLKLLQ</sequence>
<name>FLB2_CAMJU</name>
<proteinExistence type="inferred from homology"/>
<gene>
    <name type="primary">flaB</name>
</gene>
<feature type="initiator methionine" description="Removed" evidence="1">
    <location>
        <position position="1"/>
    </location>
</feature>
<feature type="chain" id="PRO_0000182598" description="Flagellin B">
    <location>
        <begin position="2"/>
        <end position="575"/>
    </location>
</feature>
<evidence type="ECO:0000250" key="1"/>
<evidence type="ECO:0000305" key="2"/>
<accession>Q46114</accession>
<reference key="1">
    <citation type="submission" date="1994-02" db="EMBL/GenBank/DDBJ databases">
        <title>Organization and sequence of the flagellin genes of Campylobacter jejuni TGH9011(ATCC43431).</title>
        <authorList>
            <person name="Chan V.L."/>
            <person name="Bingham H.L."/>
        </authorList>
    </citation>
    <scope>NUCLEOTIDE SEQUENCE [GENOMIC DNA]</scope>
    <source>
        <strain>ATCC 43431 / TGH 9011 / Serotype O:3</strain>
    </source>
</reference>
<dbReference type="EMBL" id="Z29327">
    <property type="protein sequence ID" value="CAA82524.1"/>
    <property type="molecule type" value="Genomic_DNA"/>
</dbReference>
<dbReference type="PIR" id="S41311">
    <property type="entry name" value="S41311"/>
</dbReference>
<dbReference type="SMR" id="Q46114"/>
<dbReference type="GO" id="GO:0009288">
    <property type="term" value="C:bacterial-type flagellum"/>
    <property type="evidence" value="ECO:0007669"/>
    <property type="project" value="UniProtKB-SubCell"/>
</dbReference>
<dbReference type="GO" id="GO:0005576">
    <property type="term" value="C:extracellular region"/>
    <property type="evidence" value="ECO:0007669"/>
    <property type="project" value="UniProtKB-SubCell"/>
</dbReference>
<dbReference type="GO" id="GO:0005198">
    <property type="term" value="F:structural molecule activity"/>
    <property type="evidence" value="ECO:0007669"/>
    <property type="project" value="InterPro"/>
</dbReference>
<dbReference type="Gene3D" id="3.30.70.2120">
    <property type="match status" value="1"/>
</dbReference>
<dbReference type="Gene3D" id="1.20.1330.10">
    <property type="entry name" value="f41 fragment of flagellin, N-terminal domain"/>
    <property type="match status" value="1"/>
</dbReference>
<dbReference type="Gene3D" id="6.10.10.10">
    <property type="entry name" value="Flagellar export chaperone, C-terminal domain"/>
    <property type="match status" value="1"/>
</dbReference>
<dbReference type="InterPro" id="IPR001492">
    <property type="entry name" value="Flagellin"/>
</dbReference>
<dbReference type="InterPro" id="IPR046358">
    <property type="entry name" value="Flagellin_C"/>
</dbReference>
<dbReference type="InterPro" id="IPR042187">
    <property type="entry name" value="Flagellin_C_sub2"/>
</dbReference>
<dbReference type="InterPro" id="IPR010810">
    <property type="entry name" value="Flagellin_hook_IN_motif"/>
</dbReference>
<dbReference type="InterPro" id="IPR001029">
    <property type="entry name" value="Flagellin_N"/>
</dbReference>
<dbReference type="NCBIfam" id="NF006264">
    <property type="entry name" value="PRK08411.1"/>
    <property type="match status" value="1"/>
</dbReference>
<dbReference type="NCBIfam" id="NF010115">
    <property type="entry name" value="PRK13588.1"/>
    <property type="match status" value="1"/>
</dbReference>
<dbReference type="NCBIfam" id="NF010116">
    <property type="entry name" value="PRK13589.1"/>
    <property type="match status" value="1"/>
</dbReference>
<dbReference type="PANTHER" id="PTHR42792">
    <property type="entry name" value="FLAGELLIN"/>
    <property type="match status" value="1"/>
</dbReference>
<dbReference type="PANTHER" id="PTHR42792:SF2">
    <property type="entry name" value="FLAGELLIN"/>
    <property type="match status" value="1"/>
</dbReference>
<dbReference type="Pfam" id="PF00700">
    <property type="entry name" value="Flagellin_C"/>
    <property type="match status" value="1"/>
</dbReference>
<dbReference type="Pfam" id="PF07196">
    <property type="entry name" value="Flagellin_IN"/>
    <property type="match status" value="2"/>
</dbReference>
<dbReference type="Pfam" id="PF00669">
    <property type="entry name" value="Flagellin_N"/>
    <property type="match status" value="1"/>
</dbReference>
<dbReference type="PRINTS" id="PR00207">
    <property type="entry name" value="FLAGELLIN"/>
</dbReference>
<dbReference type="SUPFAM" id="SSF64518">
    <property type="entry name" value="Phase 1 flagellin"/>
    <property type="match status" value="1"/>
</dbReference>
<organism>
    <name type="scientific">Campylobacter jejuni</name>
    <dbReference type="NCBI Taxonomy" id="197"/>
    <lineage>
        <taxon>Bacteria</taxon>
        <taxon>Pseudomonadati</taxon>
        <taxon>Campylobacterota</taxon>
        <taxon>Epsilonproteobacteria</taxon>
        <taxon>Campylobacterales</taxon>
        <taxon>Campylobacteraceae</taxon>
        <taxon>Campylobacter</taxon>
    </lineage>
</organism>
<keyword id="KW-0975">Bacterial flagellum</keyword>
<keyword id="KW-0964">Secreted</keyword>